<protein>
    <recommendedName>
        <fullName evidence="1">Nucleotide-binding protein VC0395_A1115</fullName>
    </recommendedName>
</protein>
<dbReference type="EMBL" id="CP000627">
    <property type="protein sequence ID" value="ABQ21070.1"/>
    <property type="molecule type" value="Genomic_DNA"/>
</dbReference>
<dbReference type="EMBL" id="CP001235">
    <property type="protein sequence ID" value="ACP09632.1"/>
    <property type="molecule type" value="Genomic_DNA"/>
</dbReference>
<dbReference type="RefSeq" id="WP_001138886.1">
    <property type="nucleotide sequence ID" value="NZ_JAACZH010000009.1"/>
</dbReference>
<dbReference type="SMR" id="A5F818"/>
<dbReference type="KEGG" id="vco:VC0395_A1115"/>
<dbReference type="KEGG" id="vcr:VC395_1627"/>
<dbReference type="PATRIC" id="fig|345073.21.peg.1573"/>
<dbReference type="eggNOG" id="COG1666">
    <property type="taxonomic scope" value="Bacteria"/>
</dbReference>
<dbReference type="HOGENOM" id="CLU_099839_1_0_6"/>
<dbReference type="OrthoDB" id="9801447at2"/>
<dbReference type="Proteomes" id="UP000000249">
    <property type="component" value="Chromosome 2"/>
</dbReference>
<dbReference type="GO" id="GO:0005829">
    <property type="term" value="C:cytosol"/>
    <property type="evidence" value="ECO:0007669"/>
    <property type="project" value="TreeGrafter"/>
</dbReference>
<dbReference type="GO" id="GO:0000166">
    <property type="term" value="F:nucleotide binding"/>
    <property type="evidence" value="ECO:0007669"/>
    <property type="project" value="TreeGrafter"/>
</dbReference>
<dbReference type="CDD" id="cd11740">
    <property type="entry name" value="YajQ_like"/>
    <property type="match status" value="1"/>
</dbReference>
<dbReference type="FunFam" id="3.30.70.860:FF:000001">
    <property type="entry name" value="UPF0234 protein YajQ"/>
    <property type="match status" value="1"/>
</dbReference>
<dbReference type="FunFam" id="3.30.70.990:FF:000001">
    <property type="entry name" value="UPF0234 protein YajQ"/>
    <property type="match status" value="1"/>
</dbReference>
<dbReference type="Gene3D" id="3.30.70.860">
    <property type="match status" value="1"/>
</dbReference>
<dbReference type="Gene3D" id="3.30.70.990">
    <property type="entry name" value="YajQ-like, domain 2"/>
    <property type="match status" value="1"/>
</dbReference>
<dbReference type="HAMAP" id="MF_00632">
    <property type="entry name" value="YajQ"/>
    <property type="match status" value="1"/>
</dbReference>
<dbReference type="InterPro" id="IPR007551">
    <property type="entry name" value="DUF520"/>
</dbReference>
<dbReference type="InterPro" id="IPR035571">
    <property type="entry name" value="UPF0234-like_C"/>
</dbReference>
<dbReference type="InterPro" id="IPR035570">
    <property type="entry name" value="UPF0234_N"/>
</dbReference>
<dbReference type="InterPro" id="IPR036183">
    <property type="entry name" value="YajQ-like_sf"/>
</dbReference>
<dbReference type="NCBIfam" id="NF003819">
    <property type="entry name" value="PRK05412.1"/>
    <property type="match status" value="1"/>
</dbReference>
<dbReference type="PANTHER" id="PTHR30476">
    <property type="entry name" value="UPF0234 PROTEIN YAJQ"/>
    <property type="match status" value="1"/>
</dbReference>
<dbReference type="PANTHER" id="PTHR30476:SF0">
    <property type="entry name" value="UPF0234 PROTEIN YAJQ"/>
    <property type="match status" value="1"/>
</dbReference>
<dbReference type="Pfam" id="PF04461">
    <property type="entry name" value="DUF520"/>
    <property type="match status" value="1"/>
</dbReference>
<dbReference type="SUPFAM" id="SSF89963">
    <property type="entry name" value="YajQ-like"/>
    <property type="match status" value="2"/>
</dbReference>
<feature type="chain" id="PRO_1000072664" description="Nucleotide-binding protein VC0395_A1115">
    <location>
        <begin position="1"/>
        <end position="160"/>
    </location>
</feature>
<name>Y2315_VIBC3</name>
<sequence>MPSFDIVSEIDAVELRNAVENSTRELASRFDFRNVDASFELKEETVKLAAEDDFQLGQMMDILRGNLAKRGVDARAMKAKDSVHIGKNWYKEAEFKQGLEALLAKKIVKLIKDAKIKVQASIQGDKVRVTGKKRDDLQEVMAMLREANLEQPLQYNNFRE</sequence>
<gene>
    <name type="ordered locus">VC0395_A1115</name>
    <name type="ordered locus">VC395_1627</name>
</gene>
<evidence type="ECO:0000255" key="1">
    <source>
        <dbReference type="HAMAP-Rule" id="MF_00632"/>
    </source>
</evidence>
<organism>
    <name type="scientific">Vibrio cholerae serotype O1 (strain ATCC 39541 / Classical Ogawa 395 / O395)</name>
    <dbReference type="NCBI Taxonomy" id="345073"/>
    <lineage>
        <taxon>Bacteria</taxon>
        <taxon>Pseudomonadati</taxon>
        <taxon>Pseudomonadota</taxon>
        <taxon>Gammaproteobacteria</taxon>
        <taxon>Vibrionales</taxon>
        <taxon>Vibrionaceae</taxon>
        <taxon>Vibrio</taxon>
    </lineage>
</organism>
<comment type="function">
    <text evidence="1">Nucleotide-binding protein.</text>
</comment>
<comment type="similarity">
    <text evidence="1">Belongs to the YajQ family.</text>
</comment>
<proteinExistence type="inferred from homology"/>
<accession>A5F818</accession>
<accession>C3M0R6</accession>
<keyword id="KW-0547">Nucleotide-binding</keyword>
<reference key="1">
    <citation type="submission" date="2007-03" db="EMBL/GenBank/DDBJ databases">
        <authorList>
            <person name="Heidelberg J."/>
        </authorList>
    </citation>
    <scope>NUCLEOTIDE SEQUENCE [LARGE SCALE GENOMIC DNA]</scope>
    <source>
        <strain>ATCC 39541 / Classical Ogawa 395 / O395</strain>
    </source>
</reference>
<reference key="2">
    <citation type="journal article" date="2008" name="PLoS ONE">
        <title>A recalibrated molecular clock and independent origins for the cholera pandemic clones.</title>
        <authorList>
            <person name="Feng L."/>
            <person name="Reeves P.R."/>
            <person name="Lan R."/>
            <person name="Ren Y."/>
            <person name="Gao C."/>
            <person name="Zhou Z."/>
            <person name="Ren Y."/>
            <person name="Cheng J."/>
            <person name="Wang W."/>
            <person name="Wang J."/>
            <person name="Qian W."/>
            <person name="Li D."/>
            <person name="Wang L."/>
        </authorList>
    </citation>
    <scope>NUCLEOTIDE SEQUENCE [LARGE SCALE GENOMIC DNA]</scope>
    <source>
        <strain>ATCC 39541 / Classical Ogawa 395 / O395</strain>
    </source>
</reference>